<reference key="1">
    <citation type="journal article" date="2012" name="Mol. Cell. Proteomics">
        <title>Peptidomics of three Bothrops snake venoms: insights into the molecular diversification of proteomes and peptidomes.</title>
        <authorList>
            <person name="Tashima A.K."/>
            <person name="Zelanis A."/>
            <person name="Kitano E.S."/>
            <person name="Ianzer D."/>
            <person name="Melo R.L."/>
            <person name="Rioli V."/>
            <person name="Sant'anna S.S."/>
            <person name="Schenberg A.C."/>
            <person name="Camargo A.C."/>
            <person name="Serrano S.M.T."/>
        </authorList>
    </citation>
    <scope>PROTEIN SEQUENCE</scope>
    <scope>PYROGLUTAMATE FORMATION AT GLN-1</scope>
    <scope>MASS SPECTROMETRY</scope>
    <source>
        <tissue>Venom</tissue>
    </source>
</reference>
<organism>
    <name type="scientific">Bothrops jararaca</name>
    <name type="common">Jararaca</name>
    <name type="synonym">Bothrops jajaraca</name>
    <dbReference type="NCBI Taxonomy" id="8724"/>
    <lineage>
        <taxon>Eukaryota</taxon>
        <taxon>Metazoa</taxon>
        <taxon>Chordata</taxon>
        <taxon>Craniata</taxon>
        <taxon>Vertebrata</taxon>
        <taxon>Euteleostomi</taxon>
        <taxon>Lepidosauria</taxon>
        <taxon>Squamata</taxon>
        <taxon>Bifurcata</taxon>
        <taxon>Unidentata</taxon>
        <taxon>Episquamata</taxon>
        <taxon>Toxicofera</taxon>
        <taxon>Serpentes</taxon>
        <taxon>Colubroidea</taxon>
        <taxon>Viperidae</taxon>
        <taxon>Crotalinae</taxon>
        <taxon>Bothrops</taxon>
    </lineage>
</organism>
<protein>
    <recommendedName>
        <fullName>Bradykinin-potentiating peptide 13d</fullName>
        <shortName>BPP-13d</shortName>
    </recommendedName>
</protein>
<accession>P0DL06</accession>
<feature type="peptide" id="PRO_0000421920" description="Bradykinin-potentiating peptide 13d">
    <location>
        <begin position="1"/>
        <end position="13"/>
    </location>
</feature>
<feature type="modified residue" description="Pyrrolidone carboxylic acid" evidence="2">
    <location>
        <position position="1"/>
    </location>
</feature>
<feature type="unsure residue" description="I or L">
    <location>
        <position position="9"/>
    </location>
</feature>
<keyword id="KW-0903">Direct protein sequencing</keyword>
<keyword id="KW-0382">Hypotensive agent</keyword>
<keyword id="KW-0481">Metalloenzyme inhibitor</keyword>
<keyword id="KW-0483">Metalloprotease inhibitor</keyword>
<keyword id="KW-0646">Protease inhibitor</keyword>
<keyword id="KW-0873">Pyrrolidone carboxylic acid</keyword>
<keyword id="KW-0964">Secreted</keyword>
<keyword id="KW-0800">Toxin</keyword>
<dbReference type="GO" id="GO:0005576">
    <property type="term" value="C:extracellular region"/>
    <property type="evidence" value="ECO:0007669"/>
    <property type="project" value="UniProtKB-SubCell"/>
</dbReference>
<dbReference type="GO" id="GO:0030414">
    <property type="term" value="F:peptidase inhibitor activity"/>
    <property type="evidence" value="ECO:0007669"/>
    <property type="project" value="UniProtKB-KW"/>
</dbReference>
<dbReference type="GO" id="GO:0090729">
    <property type="term" value="F:toxin activity"/>
    <property type="evidence" value="ECO:0007669"/>
    <property type="project" value="UniProtKB-KW"/>
</dbReference>
<dbReference type="GO" id="GO:0008217">
    <property type="term" value="P:regulation of blood pressure"/>
    <property type="evidence" value="ECO:0007669"/>
    <property type="project" value="UniProtKB-KW"/>
</dbReference>
<proteinExistence type="evidence at protein level"/>
<name>BPPDD_BOTJA</name>
<sequence>QGRAPHPPIPPAP</sequence>
<comment type="function">
    <text evidence="1">This peptide both inhibits the activity of the angiotensin-converting enzyme (ACE) and enhances the action of bradykinin by inhibiting the peptidases that inactivate it. It acts as an indirect hypotensive agent (By similarity).</text>
</comment>
<comment type="subcellular location">
    <subcellularLocation>
        <location>Secreted</location>
    </subcellularLocation>
</comment>
<comment type="tissue specificity">
    <text>Expressed by the venom gland.</text>
</comment>
<comment type="mass spectrometry"/>
<comment type="similarity">
    <text evidence="3">Belongs to the bradykinin-potentiating peptide family.</text>
</comment>
<evidence type="ECO:0000250" key="1"/>
<evidence type="ECO:0000269" key="2">
    <source>
    </source>
</evidence>
<evidence type="ECO:0000305" key="3"/>